<sequence length="681" mass="78735">MAPRVFRRQTLERCLREIRKATNRPECFLTIQNGLASNFTSLTKVLYDFNKVLENGRISGSPLQKLEINSFDDEQIWQQLELQNEPVLQYFQNAVSETVEDEDISLLPECEDEECEEDASEVEADNQENLETDLDEEQLSDEGGDVPKGRDRAKSSRKSDPRKSPVFSDEDSDLDFDIGKLEQQTKMQIKPPGKPREKSVVDDKFFKLSEMESFLEKVEKEEEKRPDGEEEDEEDIDLFEDIDSDESEGGLFGRQKIKSNKSSRNLKYKDFFDPVESDEDITGVDEELGPDEEKEEEEGFAEEADESISDTDEDNDLEEDENSDQHKGSLKRVTFALPDDEAEDTSPLAVKQESDEVKSSFEKRQEKMNEKIASLEKELLDKKPWQLQGEVTAQKRPENSLLEETLHFDHAVRMAPVITEETTLHLEDIIKQRIRDQAWDDVERKEKPKEDAYEYKKRLTLDHEKSKLSLAEIYEQEYLKLNQQKTEEEDNPEHVEIQKMMDSLFLKLDALSNFHFIPKPPVPEIKVVSNLPAITMEEVAPVSVSDAALLAPEEIKEKNKAGDLKTAAEKTATDKKRERRKKKYQKRLKIKEKEKRKKLLEKNNPDQSKSSRAAASEKLKQLTKTGKVSLLKDERKDKPLKSSQAFFSKLQDQVKMQINDAKQPEKIKKKKQDISVHKLKL</sequence>
<accession>Q810V0</accession>
<accession>E9QM78</accession>
<keyword id="KW-0007">Acetylation</keyword>
<keyword id="KW-0158">Chromosome</keyword>
<keyword id="KW-0175">Coiled coil</keyword>
<keyword id="KW-1017">Isopeptide bond</keyword>
<keyword id="KW-0539">Nucleus</keyword>
<keyword id="KW-0597">Phosphoprotein</keyword>
<keyword id="KW-1185">Reference proteome</keyword>
<keyword id="KW-0687">Ribonucleoprotein</keyword>
<keyword id="KW-0690">Ribosome biogenesis</keyword>
<keyword id="KW-0698">rRNA processing</keyword>
<keyword id="KW-0832">Ubl conjugation</keyword>
<reference key="1">
    <citation type="journal article" date="2009" name="PLoS Biol.">
        <title>Lineage-specific biology revealed by a finished genome assembly of the mouse.</title>
        <authorList>
            <person name="Church D.M."/>
            <person name="Goodstadt L."/>
            <person name="Hillier L.W."/>
            <person name="Zody M.C."/>
            <person name="Goldstein S."/>
            <person name="She X."/>
            <person name="Bult C.J."/>
            <person name="Agarwala R."/>
            <person name="Cherry J.L."/>
            <person name="DiCuccio M."/>
            <person name="Hlavina W."/>
            <person name="Kapustin Y."/>
            <person name="Meric P."/>
            <person name="Maglott D."/>
            <person name="Birtle Z."/>
            <person name="Marques A.C."/>
            <person name="Graves T."/>
            <person name="Zhou S."/>
            <person name="Teague B."/>
            <person name="Potamousis K."/>
            <person name="Churas C."/>
            <person name="Place M."/>
            <person name="Herschleb J."/>
            <person name="Runnheim R."/>
            <person name="Forrest D."/>
            <person name="Amos-Landgraf J."/>
            <person name="Schwartz D.C."/>
            <person name="Cheng Z."/>
            <person name="Lindblad-Toh K."/>
            <person name="Eichler E.E."/>
            <person name="Ponting C.P."/>
        </authorList>
    </citation>
    <scope>NUCLEOTIDE SEQUENCE [LARGE SCALE GENOMIC DNA]</scope>
    <source>
        <strain>C57BL/6J</strain>
    </source>
</reference>
<reference key="2">
    <citation type="journal article" date="2004" name="Genome Res.">
        <title>The status, quality, and expansion of the NIH full-length cDNA project: the Mammalian Gene Collection (MGC).</title>
        <authorList>
            <consortium name="The MGC Project Team"/>
        </authorList>
    </citation>
    <scope>NUCLEOTIDE SEQUENCE [LARGE SCALE MRNA]</scope>
    <source>
        <strain>Czech II</strain>
        <tissue>Mammary tumor</tissue>
    </source>
</reference>
<reference key="3">
    <citation type="journal article" date="2007" name="Proc. Natl. Acad. Sci. U.S.A.">
        <title>Large-scale phosphorylation analysis of mouse liver.</title>
        <authorList>
            <person name="Villen J."/>
            <person name="Beausoleil S.A."/>
            <person name="Gerber S.A."/>
            <person name="Gygi S.P."/>
        </authorList>
    </citation>
    <scope>PHOSPHORYLATION [LARGE SCALE ANALYSIS] AT SER-164</scope>
    <scope>IDENTIFICATION BY MASS SPECTROMETRY [LARGE SCALE ANALYSIS]</scope>
    <source>
        <tissue>Liver</tissue>
    </source>
</reference>
<reference key="4">
    <citation type="journal article" date="2009" name="Immunity">
        <title>The phagosomal proteome in interferon-gamma-activated macrophages.</title>
        <authorList>
            <person name="Trost M."/>
            <person name="English L."/>
            <person name="Lemieux S."/>
            <person name="Courcelles M."/>
            <person name="Desjardins M."/>
            <person name="Thibault P."/>
        </authorList>
    </citation>
    <scope>PHOSPHORYLATION [LARGE SCALE ANALYSIS] AT SER-244 AND SER-247</scope>
    <scope>IDENTIFICATION BY MASS SPECTROMETRY [LARGE SCALE ANALYSIS]</scope>
</reference>
<reference key="5">
    <citation type="journal article" date="2010" name="Cell">
        <title>A tissue-specific atlas of mouse protein phosphorylation and expression.</title>
        <authorList>
            <person name="Huttlin E.L."/>
            <person name="Jedrychowski M.P."/>
            <person name="Elias J.E."/>
            <person name="Goswami T."/>
            <person name="Rad R."/>
            <person name="Beausoleil S.A."/>
            <person name="Villen J."/>
            <person name="Haas W."/>
            <person name="Sowa M.E."/>
            <person name="Gygi S.P."/>
        </authorList>
    </citation>
    <scope>PHOSPHORYLATION [LARGE SCALE ANALYSIS] AT SER-164; SER-168; SER-172; SER-244 AND SER-346</scope>
    <scope>IDENTIFICATION BY MASS SPECTROMETRY [LARGE SCALE ANALYSIS]</scope>
    <source>
        <tissue>Brain</tissue>
        <tissue>Kidney</tissue>
        <tissue>Lung</tissue>
        <tissue>Pancreas</tissue>
        <tissue>Spleen</tissue>
        <tissue>Testis</tissue>
    </source>
</reference>
<evidence type="ECO:0000250" key="1">
    <source>
        <dbReference type="UniProtKB" id="O00566"/>
    </source>
</evidence>
<evidence type="ECO:0000255" key="2"/>
<evidence type="ECO:0000256" key="3">
    <source>
        <dbReference type="SAM" id="MobiDB-lite"/>
    </source>
</evidence>
<evidence type="ECO:0000305" key="4"/>
<evidence type="ECO:0007744" key="5">
    <source>
    </source>
</evidence>
<evidence type="ECO:0007744" key="6">
    <source>
    </source>
</evidence>
<evidence type="ECO:0007744" key="7">
    <source>
    </source>
</evidence>
<feature type="chain" id="PRO_0000121536" description="U3 small nucleolar ribonucleoprotein protein MPP10">
    <location>
        <begin position="1"/>
        <end position="681"/>
    </location>
</feature>
<feature type="region of interest" description="Disordered" evidence="3">
    <location>
        <begin position="111"/>
        <end position="202"/>
    </location>
</feature>
<feature type="region of interest" description="Disordered" evidence="3">
    <location>
        <begin position="215"/>
        <end position="256"/>
    </location>
</feature>
<feature type="region of interest" description="Disordered" evidence="3">
    <location>
        <begin position="268"/>
        <end position="365"/>
    </location>
</feature>
<feature type="region of interest" description="Disordered" evidence="3">
    <location>
        <begin position="560"/>
        <end position="644"/>
    </location>
</feature>
<feature type="region of interest" description="Disordered" evidence="3">
    <location>
        <begin position="657"/>
        <end position="681"/>
    </location>
</feature>
<feature type="coiled-coil region" evidence="2">
    <location>
        <begin position="109"/>
        <end position="139"/>
    </location>
</feature>
<feature type="coiled-coil region" evidence="2">
    <location>
        <begin position="349"/>
        <end position="383"/>
    </location>
</feature>
<feature type="coiled-coil region" evidence="2">
    <location>
        <begin position="471"/>
        <end position="491"/>
    </location>
</feature>
<feature type="coiled-coil region" evidence="2">
    <location>
        <begin position="575"/>
        <end position="604"/>
    </location>
</feature>
<feature type="compositionally biased region" description="Acidic residues" evidence="3">
    <location>
        <begin position="111"/>
        <end position="144"/>
    </location>
</feature>
<feature type="compositionally biased region" description="Basic and acidic residues" evidence="3">
    <location>
        <begin position="145"/>
        <end position="163"/>
    </location>
</feature>
<feature type="compositionally biased region" description="Basic and acidic residues" evidence="3">
    <location>
        <begin position="215"/>
        <end position="227"/>
    </location>
</feature>
<feature type="compositionally biased region" description="Acidic residues" evidence="3">
    <location>
        <begin position="228"/>
        <end position="248"/>
    </location>
</feature>
<feature type="compositionally biased region" description="Acidic residues" evidence="3">
    <location>
        <begin position="273"/>
        <end position="322"/>
    </location>
</feature>
<feature type="compositionally biased region" description="Basic and acidic residues" evidence="3">
    <location>
        <begin position="352"/>
        <end position="365"/>
    </location>
</feature>
<feature type="compositionally biased region" description="Basic and acidic residues" evidence="3">
    <location>
        <begin position="560"/>
        <end position="576"/>
    </location>
</feature>
<feature type="compositionally biased region" description="Basic residues" evidence="3">
    <location>
        <begin position="577"/>
        <end position="599"/>
    </location>
</feature>
<feature type="compositionally biased region" description="Basic and acidic residues" evidence="3">
    <location>
        <begin position="630"/>
        <end position="640"/>
    </location>
</feature>
<feature type="compositionally biased region" description="Basic and acidic residues" evidence="3">
    <location>
        <begin position="662"/>
        <end position="681"/>
    </location>
</feature>
<feature type="modified residue" description="Phosphoserine" evidence="2">
    <location>
        <position position="61"/>
    </location>
</feature>
<feature type="modified residue" description="Phosphoserine" evidence="1">
    <location>
        <position position="120"/>
    </location>
</feature>
<feature type="modified residue" description="Phosphoserine" evidence="1">
    <location>
        <position position="140"/>
    </location>
</feature>
<feature type="modified residue" description="Phosphoserine" evidence="5 7">
    <location>
        <position position="164"/>
    </location>
</feature>
<feature type="modified residue" description="Phosphoserine" evidence="7">
    <location>
        <position position="168"/>
    </location>
</feature>
<feature type="modified residue" description="Phosphoserine" evidence="7">
    <location>
        <position position="172"/>
    </location>
</feature>
<feature type="modified residue" description="Phosphoserine" evidence="6 7">
    <location>
        <position position="244"/>
    </location>
</feature>
<feature type="modified residue" description="Phosphoserine" evidence="6">
    <location>
        <position position="247"/>
    </location>
</feature>
<feature type="modified residue" description="Phosphoserine" evidence="1">
    <location>
        <position position="277"/>
    </location>
</feature>
<feature type="modified residue" description="Phosphoserine" evidence="7">
    <location>
        <position position="346"/>
    </location>
</feature>
<feature type="modified residue" description="N6-acetyllysine" evidence="1">
    <location>
        <position position="609"/>
    </location>
</feature>
<feature type="cross-link" description="Glycyl lysine isopeptide (Lys-Gly) (interchain with G-Cter in SUMO2)" evidence="1">
    <location>
        <position position="351"/>
    </location>
</feature>
<feature type="cross-link" description="Glycyl lysine isopeptide (Lys-Gly) (interchain with G-Cter in SUMO2)" evidence="1">
    <location>
        <position position="383"/>
    </location>
</feature>
<feature type="cross-link" description="Glycyl lysine isopeptide (Lys-Gly) (interchain with G-Cter in SUMO2)" evidence="1">
    <location>
        <position position="395"/>
    </location>
</feature>
<feature type="cross-link" description="Glycyl lysine isopeptide (Lys-Gly) (interchain with G-Cter in SUMO2)" evidence="1">
    <location>
        <position position="556"/>
    </location>
</feature>
<feature type="cross-link" description="Glycyl lysine isopeptide (Lys-Gly) (interchain with G-Cter in SUMO2)" evidence="1">
    <location>
        <position position="632"/>
    </location>
</feature>
<feature type="cross-link" description="Glycyl lysine isopeptide (Lys-Gly) (interchain with G-Cter in SUMO2)" evidence="1">
    <location>
        <position position="649"/>
    </location>
</feature>
<feature type="sequence conflict" description="In Ref. 2; AAH49270." evidence="4" ref="2">
    <original>V</original>
    <variation>I</variation>
    <location>
        <position position="99"/>
    </location>
</feature>
<feature type="sequence conflict" description="In Ref. 2; AAH49270." evidence="4" ref="2">
    <original>D</original>
    <variation>E</variation>
    <location>
        <position position="135"/>
    </location>
</feature>
<feature type="sequence conflict" description="In Ref. 2; AAH49270." evidence="4" ref="2">
    <original>S</original>
    <variation>G</variation>
    <location>
        <position position="329"/>
    </location>
</feature>
<feature type="sequence conflict" description="In Ref. 2; AAH49270." evidence="4" ref="2">
    <original>E</original>
    <variation>A</variation>
    <location>
        <position position="487"/>
    </location>
</feature>
<organism>
    <name type="scientific">Mus musculus</name>
    <name type="common">Mouse</name>
    <dbReference type="NCBI Taxonomy" id="10090"/>
    <lineage>
        <taxon>Eukaryota</taxon>
        <taxon>Metazoa</taxon>
        <taxon>Chordata</taxon>
        <taxon>Craniata</taxon>
        <taxon>Vertebrata</taxon>
        <taxon>Euteleostomi</taxon>
        <taxon>Mammalia</taxon>
        <taxon>Eutheria</taxon>
        <taxon>Euarchontoglires</taxon>
        <taxon>Glires</taxon>
        <taxon>Rodentia</taxon>
        <taxon>Myomorpha</taxon>
        <taxon>Muroidea</taxon>
        <taxon>Muridae</taxon>
        <taxon>Murinae</taxon>
        <taxon>Mus</taxon>
        <taxon>Mus</taxon>
    </lineage>
</organism>
<gene>
    <name type="primary">Mphosph10</name>
</gene>
<dbReference type="EMBL" id="AC129199">
    <property type="status" value="NOT_ANNOTATED_CDS"/>
    <property type="molecule type" value="Genomic_DNA"/>
</dbReference>
<dbReference type="EMBL" id="BC049270">
    <property type="protein sequence ID" value="AAH49270.1"/>
    <property type="molecule type" value="mRNA"/>
</dbReference>
<dbReference type="CCDS" id="CCDS21333.1"/>
<dbReference type="RefSeq" id="NP_080759.2">
    <property type="nucleotide sequence ID" value="NM_026483.2"/>
</dbReference>
<dbReference type="SMR" id="Q810V0"/>
<dbReference type="BioGRID" id="212574">
    <property type="interactions" value="1"/>
</dbReference>
<dbReference type="FunCoup" id="Q810V0">
    <property type="interactions" value="3452"/>
</dbReference>
<dbReference type="STRING" id="10090.ENSMUSP00000032735"/>
<dbReference type="iPTMnet" id="Q810V0"/>
<dbReference type="PhosphoSitePlus" id="Q810V0"/>
<dbReference type="jPOST" id="Q810V0"/>
<dbReference type="PaxDb" id="10090-ENSMUSP00000032735"/>
<dbReference type="PeptideAtlas" id="Q810V0"/>
<dbReference type="ProteomicsDB" id="291436"/>
<dbReference type="Pumba" id="Q810V0"/>
<dbReference type="Antibodypedia" id="31197">
    <property type="antibodies" value="135 antibodies from 24 providers"/>
</dbReference>
<dbReference type="DNASU" id="67973"/>
<dbReference type="Ensembl" id="ENSMUST00000032735.8">
    <property type="protein sequence ID" value="ENSMUSP00000032735.6"/>
    <property type="gene ID" value="ENSMUSG00000030521.12"/>
</dbReference>
<dbReference type="GeneID" id="67973"/>
<dbReference type="KEGG" id="mmu:67973"/>
<dbReference type="UCSC" id="uc009hgg.1">
    <property type="organism name" value="mouse"/>
</dbReference>
<dbReference type="AGR" id="MGI:1915223"/>
<dbReference type="CTD" id="10199"/>
<dbReference type="MGI" id="MGI:1915223">
    <property type="gene designation" value="Mphosph10"/>
</dbReference>
<dbReference type="VEuPathDB" id="HostDB:ENSMUSG00000030521"/>
<dbReference type="eggNOG" id="KOG2600">
    <property type="taxonomic scope" value="Eukaryota"/>
</dbReference>
<dbReference type="GeneTree" id="ENSGT00390000011359"/>
<dbReference type="HOGENOM" id="CLU_011271_3_1_1"/>
<dbReference type="InParanoid" id="Q810V0"/>
<dbReference type="OMA" id="HFAEDFG"/>
<dbReference type="OrthoDB" id="445326at2759"/>
<dbReference type="PhylomeDB" id="Q810V0"/>
<dbReference type="TreeFam" id="TF105794"/>
<dbReference type="Reactome" id="R-MMU-6791226">
    <property type="pathway name" value="Major pathway of rRNA processing in the nucleolus and cytosol"/>
</dbReference>
<dbReference type="BioGRID-ORCS" id="67973">
    <property type="hits" value="28 hits in 77 CRISPR screens"/>
</dbReference>
<dbReference type="ChiTaRS" id="Mphosph10">
    <property type="organism name" value="mouse"/>
</dbReference>
<dbReference type="PRO" id="PR:Q810V0"/>
<dbReference type="Proteomes" id="UP000000589">
    <property type="component" value="Chromosome 7"/>
</dbReference>
<dbReference type="RNAct" id="Q810V0">
    <property type="molecule type" value="protein"/>
</dbReference>
<dbReference type="Bgee" id="ENSMUSG00000030521">
    <property type="expression patterns" value="Expressed in undifferentiated genital tubercle and 262 other cell types or tissues"/>
</dbReference>
<dbReference type="GO" id="GO:0005694">
    <property type="term" value="C:chromosome"/>
    <property type="evidence" value="ECO:0007669"/>
    <property type="project" value="UniProtKB-SubCell"/>
</dbReference>
<dbReference type="GO" id="GO:0034457">
    <property type="term" value="C:Mpp10 complex"/>
    <property type="evidence" value="ECO:0007669"/>
    <property type="project" value="Ensembl"/>
</dbReference>
<dbReference type="GO" id="GO:0032040">
    <property type="term" value="C:small-subunit processome"/>
    <property type="evidence" value="ECO:0000250"/>
    <property type="project" value="UniProtKB"/>
</dbReference>
<dbReference type="GO" id="GO:0005732">
    <property type="term" value="C:sno(s)RNA-containing ribonucleoprotein complex"/>
    <property type="evidence" value="ECO:0007669"/>
    <property type="project" value="InterPro"/>
</dbReference>
<dbReference type="GO" id="GO:0042274">
    <property type="term" value="P:ribosomal small subunit biogenesis"/>
    <property type="evidence" value="ECO:0000250"/>
    <property type="project" value="UniProtKB"/>
</dbReference>
<dbReference type="GO" id="GO:0006364">
    <property type="term" value="P:rRNA processing"/>
    <property type="evidence" value="ECO:0007669"/>
    <property type="project" value="UniProtKB-KW"/>
</dbReference>
<dbReference type="InterPro" id="IPR012173">
    <property type="entry name" value="Mpp10"/>
</dbReference>
<dbReference type="PANTHER" id="PTHR17039">
    <property type="entry name" value="U3 SMALL NUCLEOLAR RIBONUCLEOPROTEIN PROTEIN MPP10"/>
    <property type="match status" value="1"/>
</dbReference>
<dbReference type="PANTHER" id="PTHR17039:SF0">
    <property type="entry name" value="U3 SMALL NUCLEOLAR RIBONUCLEOPROTEIN PROTEIN MPP10"/>
    <property type="match status" value="1"/>
</dbReference>
<dbReference type="Pfam" id="PF04006">
    <property type="entry name" value="Mpp10"/>
    <property type="match status" value="1"/>
</dbReference>
<dbReference type="PIRSF" id="PIRSF017300">
    <property type="entry name" value="snoRNP_Mpp10"/>
    <property type="match status" value="1"/>
</dbReference>
<comment type="function">
    <text evidence="1">Component of the 60-80S U3 small nucleolar ribonucleoprotein (U3 snoRNP). Required for the early cleavages during pre-18S ribosomal RNA processing. Part of the small subunit (SSU) processome, first precursor of the small eukaryotic ribosomal subunit. During the assembly of the SSU processome in the nucleolus, many ribosome biogenesis factors, an RNA chaperone and ribosomal proteins associate with the nascent pre-rRNA and work in concert to generate RNA folding, modifications, rearrangements and cleavage as well as targeted degradation of pre-ribosomal RNA by the RNA exosome.</text>
</comment>
<comment type="subunit">
    <text evidence="1">Part of the small subunit (SSU) processome, composed of more than 70 proteins and the RNA chaperone small nucleolar RNA (snoRNA) U3. Component of a heterotrimeric complex containing IMP3, IMP4 and MPHOSPH10. Interacts with IMP3 and IMP4.</text>
</comment>
<comment type="subcellular location">
    <subcellularLocation>
        <location evidence="1">Nucleus</location>
        <location evidence="1">Nucleolus</location>
    </subcellularLocation>
    <subcellularLocation>
        <location evidence="1">Chromosome</location>
    </subcellularLocation>
    <text evidence="1">Fibrillar region of the nucleolus. After dissolution of the nucleolus in early M phase becomes associated with chromosomes through metaphase and anaphase. In telophase localized to small cellular prenucleolar bodies that not always contain fibrillarin. The reassociation with nucleolus is preceeded by the arrival of fibrillarin.</text>
</comment>
<comment type="PTM">
    <text evidence="1">Phosphorylated in M (mitotic) phase.</text>
</comment>
<comment type="similarity">
    <text evidence="4">Belongs to the MPP10 family.</text>
</comment>
<name>MPP10_MOUSE</name>
<protein>
    <recommendedName>
        <fullName>U3 small nucleolar ribonucleoprotein protein MPP10</fullName>
    </recommendedName>
    <alternativeName>
        <fullName>M phase phosphoprotein 10</fullName>
    </alternativeName>
</protein>
<proteinExistence type="evidence at protein level"/>